<dbReference type="EC" id="2.7.1.2" evidence="1"/>
<dbReference type="EMBL" id="CP000036">
    <property type="protein sequence ID" value="ABB66975.1"/>
    <property type="molecule type" value="Genomic_DNA"/>
</dbReference>
<dbReference type="RefSeq" id="WP_000598932.1">
    <property type="nucleotide sequence ID" value="NC_007613.1"/>
</dbReference>
<dbReference type="SMR" id="Q31Y83"/>
<dbReference type="KEGG" id="sbo:SBO_2414"/>
<dbReference type="HOGENOM" id="CLU_042582_1_0_6"/>
<dbReference type="Proteomes" id="UP000007067">
    <property type="component" value="Chromosome"/>
</dbReference>
<dbReference type="GO" id="GO:0005829">
    <property type="term" value="C:cytosol"/>
    <property type="evidence" value="ECO:0007669"/>
    <property type="project" value="TreeGrafter"/>
</dbReference>
<dbReference type="GO" id="GO:0005524">
    <property type="term" value="F:ATP binding"/>
    <property type="evidence" value="ECO:0007669"/>
    <property type="project" value="UniProtKB-UniRule"/>
</dbReference>
<dbReference type="GO" id="GO:0005536">
    <property type="term" value="F:D-glucose binding"/>
    <property type="evidence" value="ECO:0007669"/>
    <property type="project" value="InterPro"/>
</dbReference>
<dbReference type="GO" id="GO:0004340">
    <property type="term" value="F:glucokinase activity"/>
    <property type="evidence" value="ECO:0007669"/>
    <property type="project" value="UniProtKB-UniRule"/>
</dbReference>
<dbReference type="GO" id="GO:0006096">
    <property type="term" value="P:glycolytic process"/>
    <property type="evidence" value="ECO:0007669"/>
    <property type="project" value="UniProtKB-UniRule"/>
</dbReference>
<dbReference type="CDD" id="cd24008">
    <property type="entry name" value="ASKHA_NBD_GLK"/>
    <property type="match status" value="1"/>
</dbReference>
<dbReference type="FunFam" id="3.30.420.40:FF:000045">
    <property type="entry name" value="Glucokinase"/>
    <property type="match status" value="1"/>
</dbReference>
<dbReference type="FunFam" id="3.40.367.20:FF:000002">
    <property type="entry name" value="Glucokinase"/>
    <property type="match status" value="1"/>
</dbReference>
<dbReference type="Gene3D" id="3.30.420.40">
    <property type="match status" value="1"/>
</dbReference>
<dbReference type="Gene3D" id="3.40.367.20">
    <property type="match status" value="1"/>
</dbReference>
<dbReference type="HAMAP" id="MF_00524">
    <property type="entry name" value="Glucokinase"/>
    <property type="match status" value="1"/>
</dbReference>
<dbReference type="InterPro" id="IPR043129">
    <property type="entry name" value="ATPase_NBD"/>
</dbReference>
<dbReference type="InterPro" id="IPR050201">
    <property type="entry name" value="Bacterial_glucokinase"/>
</dbReference>
<dbReference type="InterPro" id="IPR003836">
    <property type="entry name" value="Glucokinase"/>
</dbReference>
<dbReference type="NCBIfam" id="TIGR00749">
    <property type="entry name" value="glk"/>
    <property type="match status" value="1"/>
</dbReference>
<dbReference type="NCBIfam" id="NF001414">
    <property type="entry name" value="PRK00292.1-1"/>
    <property type="match status" value="1"/>
</dbReference>
<dbReference type="NCBIfam" id="NF001416">
    <property type="entry name" value="PRK00292.1-3"/>
    <property type="match status" value="1"/>
</dbReference>
<dbReference type="PANTHER" id="PTHR47690">
    <property type="entry name" value="GLUCOKINASE"/>
    <property type="match status" value="1"/>
</dbReference>
<dbReference type="PANTHER" id="PTHR47690:SF1">
    <property type="entry name" value="GLUCOKINASE"/>
    <property type="match status" value="1"/>
</dbReference>
<dbReference type="Pfam" id="PF02685">
    <property type="entry name" value="Glucokinase"/>
    <property type="match status" value="1"/>
</dbReference>
<dbReference type="SUPFAM" id="SSF53067">
    <property type="entry name" value="Actin-like ATPase domain"/>
    <property type="match status" value="1"/>
</dbReference>
<feature type="chain" id="PRO_0000268787" description="Glucokinase">
    <location>
        <begin position="1"/>
        <end position="321"/>
    </location>
</feature>
<feature type="binding site" evidence="1">
    <location>
        <begin position="8"/>
        <end position="13"/>
    </location>
    <ligand>
        <name>ATP</name>
        <dbReference type="ChEBI" id="CHEBI:30616"/>
    </ligand>
</feature>
<evidence type="ECO:0000255" key="1">
    <source>
        <dbReference type="HAMAP-Rule" id="MF_00524"/>
    </source>
</evidence>
<accession>Q31Y83</accession>
<organism>
    <name type="scientific">Shigella boydii serotype 4 (strain Sb227)</name>
    <dbReference type="NCBI Taxonomy" id="300268"/>
    <lineage>
        <taxon>Bacteria</taxon>
        <taxon>Pseudomonadati</taxon>
        <taxon>Pseudomonadota</taxon>
        <taxon>Gammaproteobacteria</taxon>
        <taxon>Enterobacterales</taxon>
        <taxon>Enterobacteriaceae</taxon>
        <taxon>Shigella</taxon>
    </lineage>
</organism>
<reference key="1">
    <citation type="journal article" date="2005" name="Nucleic Acids Res.">
        <title>Genome dynamics and diversity of Shigella species, the etiologic agents of bacillary dysentery.</title>
        <authorList>
            <person name="Yang F."/>
            <person name="Yang J."/>
            <person name="Zhang X."/>
            <person name="Chen L."/>
            <person name="Jiang Y."/>
            <person name="Yan Y."/>
            <person name="Tang X."/>
            <person name="Wang J."/>
            <person name="Xiong Z."/>
            <person name="Dong J."/>
            <person name="Xue Y."/>
            <person name="Zhu Y."/>
            <person name="Xu X."/>
            <person name="Sun L."/>
            <person name="Chen S."/>
            <person name="Nie H."/>
            <person name="Peng J."/>
            <person name="Xu J."/>
            <person name="Wang Y."/>
            <person name="Yuan Z."/>
            <person name="Wen Y."/>
            <person name="Yao Z."/>
            <person name="Shen Y."/>
            <person name="Qiang B."/>
            <person name="Hou Y."/>
            <person name="Yu J."/>
            <person name="Jin Q."/>
        </authorList>
    </citation>
    <scope>NUCLEOTIDE SEQUENCE [LARGE SCALE GENOMIC DNA]</scope>
    <source>
        <strain>Sb227</strain>
    </source>
</reference>
<protein>
    <recommendedName>
        <fullName evidence="1">Glucokinase</fullName>
        <ecNumber evidence="1">2.7.1.2</ecNumber>
    </recommendedName>
    <alternativeName>
        <fullName evidence="1">Glucose kinase</fullName>
    </alternativeName>
</protein>
<comment type="catalytic activity">
    <reaction evidence="1">
        <text>D-glucose + ATP = D-glucose 6-phosphate + ADP + H(+)</text>
        <dbReference type="Rhea" id="RHEA:17825"/>
        <dbReference type="ChEBI" id="CHEBI:4167"/>
        <dbReference type="ChEBI" id="CHEBI:15378"/>
        <dbReference type="ChEBI" id="CHEBI:30616"/>
        <dbReference type="ChEBI" id="CHEBI:61548"/>
        <dbReference type="ChEBI" id="CHEBI:456216"/>
        <dbReference type="EC" id="2.7.1.2"/>
    </reaction>
</comment>
<comment type="subcellular location">
    <subcellularLocation>
        <location evidence="1">Cytoplasm</location>
    </subcellularLocation>
</comment>
<comment type="similarity">
    <text evidence="1">Belongs to the bacterial glucokinase family.</text>
</comment>
<gene>
    <name evidence="1" type="primary">glk</name>
    <name type="ordered locus">SBO_2414</name>
</gene>
<name>GLK_SHIBS</name>
<keyword id="KW-0067">ATP-binding</keyword>
<keyword id="KW-0963">Cytoplasm</keyword>
<keyword id="KW-0324">Glycolysis</keyword>
<keyword id="KW-0418">Kinase</keyword>
<keyword id="KW-0547">Nucleotide-binding</keyword>
<keyword id="KW-0808">Transferase</keyword>
<proteinExistence type="inferred from homology"/>
<sequence length="321" mass="34735">MIKYALVGDVGGTNARLALCDIASGEISQAKTYSGLDYPSLEAVIRVYLEEHKVEVKDGCIAIACPITGDWVAMTNHTWAFSIAEMKKNLGFSHLEIINDFTAVSMAIPMLKKEHLIQFGGAEPVEGKPIAVYGAGTGLGVAHLVHVDKRWVSLPGEGGHVDFAPNSEEEAIILEILRAEIGHVSAERVLSGPGLVNLYRAIVKADNRLPENLKPKDITERALADSCTDCRRALSLFCVIMGRFGGNLALNLGTFGGVFIAGGIVPRFLEFFKASGFRAAFEDKGRFKEYVHDIPVYLIVHDNPGLLGSGAHLRQTLGHIL</sequence>